<reference key="1">
    <citation type="journal article" date="2008" name="BMC Genomics">
        <title>Genome sequence and rapid evolution of the rice pathogen Xanthomonas oryzae pv. oryzae PXO99A.</title>
        <authorList>
            <person name="Salzberg S.L."/>
            <person name="Sommer D.D."/>
            <person name="Schatz M.C."/>
            <person name="Phillippy A.M."/>
            <person name="Rabinowicz P.D."/>
            <person name="Tsuge S."/>
            <person name="Furutani A."/>
            <person name="Ochiai H."/>
            <person name="Delcher A.L."/>
            <person name="Kelley D."/>
            <person name="Madupu R."/>
            <person name="Puiu D."/>
            <person name="Radune D."/>
            <person name="Shumway M."/>
            <person name="Trapnell C."/>
            <person name="Aparna G."/>
            <person name="Jha G."/>
            <person name="Pandey A."/>
            <person name="Patil P.B."/>
            <person name="Ishihara H."/>
            <person name="Meyer D.F."/>
            <person name="Szurek B."/>
            <person name="Verdier V."/>
            <person name="Koebnik R."/>
            <person name="Dow J.M."/>
            <person name="Ryan R.P."/>
            <person name="Hirata H."/>
            <person name="Tsuyumu S."/>
            <person name="Won Lee S."/>
            <person name="Seo Y.-S."/>
            <person name="Sriariyanum M."/>
            <person name="Ronald P.C."/>
            <person name="Sonti R.V."/>
            <person name="Van Sluys M.-A."/>
            <person name="Leach J.E."/>
            <person name="White F.F."/>
            <person name="Bogdanove A.J."/>
        </authorList>
    </citation>
    <scope>NUCLEOTIDE SEQUENCE [LARGE SCALE GENOMIC DNA]</scope>
    <source>
        <strain>PXO99A</strain>
    </source>
</reference>
<organism>
    <name type="scientific">Xanthomonas oryzae pv. oryzae (strain PXO99A)</name>
    <dbReference type="NCBI Taxonomy" id="360094"/>
    <lineage>
        <taxon>Bacteria</taxon>
        <taxon>Pseudomonadati</taxon>
        <taxon>Pseudomonadota</taxon>
        <taxon>Gammaproteobacteria</taxon>
        <taxon>Lysobacterales</taxon>
        <taxon>Lysobacteraceae</taxon>
        <taxon>Xanthomonas</taxon>
    </lineage>
</organism>
<accession>B2SVK5</accession>
<feature type="chain" id="PRO_0000384806" description="Ribosome maturation factor RimP">
    <location>
        <begin position="1"/>
        <end position="196"/>
    </location>
</feature>
<feature type="region of interest" description="Disordered" evidence="2">
    <location>
        <begin position="164"/>
        <end position="196"/>
    </location>
</feature>
<feature type="compositionally biased region" description="Basic residues" evidence="2">
    <location>
        <begin position="173"/>
        <end position="182"/>
    </location>
</feature>
<comment type="function">
    <text evidence="1">Required for maturation of 30S ribosomal subunits.</text>
</comment>
<comment type="subcellular location">
    <subcellularLocation>
        <location evidence="1">Cytoplasm</location>
    </subcellularLocation>
</comment>
<comment type="similarity">
    <text evidence="1">Belongs to the RimP family.</text>
</comment>
<comment type="sequence caution" evidence="3">
    <conflict type="erroneous initiation">
        <sequence resource="EMBL-CDS" id="ACD60079"/>
    </conflict>
</comment>
<protein>
    <recommendedName>
        <fullName evidence="1">Ribosome maturation factor RimP</fullName>
    </recommendedName>
</protein>
<dbReference type="EMBL" id="CP000967">
    <property type="protein sequence ID" value="ACD60079.1"/>
    <property type="status" value="ALT_INIT"/>
    <property type="molecule type" value="Genomic_DNA"/>
</dbReference>
<dbReference type="RefSeq" id="WP_011259738.1">
    <property type="nucleotide sequence ID" value="NC_010717.2"/>
</dbReference>
<dbReference type="SMR" id="B2SVK5"/>
<dbReference type="KEGG" id="xop:PXO_01301"/>
<dbReference type="eggNOG" id="COG0779">
    <property type="taxonomic scope" value="Bacteria"/>
</dbReference>
<dbReference type="HOGENOM" id="CLU_070525_1_1_6"/>
<dbReference type="Proteomes" id="UP000001740">
    <property type="component" value="Chromosome"/>
</dbReference>
<dbReference type="GO" id="GO:0005829">
    <property type="term" value="C:cytosol"/>
    <property type="evidence" value="ECO:0007669"/>
    <property type="project" value="TreeGrafter"/>
</dbReference>
<dbReference type="GO" id="GO:0000028">
    <property type="term" value="P:ribosomal small subunit assembly"/>
    <property type="evidence" value="ECO:0007669"/>
    <property type="project" value="TreeGrafter"/>
</dbReference>
<dbReference type="GO" id="GO:0006412">
    <property type="term" value="P:translation"/>
    <property type="evidence" value="ECO:0007669"/>
    <property type="project" value="TreeGrafter"/>
</dbReference>
<dbReference type="CDD" id="cd01734">
    <property type="entry name" value="YlxS_C"/>
    <property type="match status" value="1"/>
</dbReference>
<dbReference type="FunFam" id="3.30.300.70:FF:000001">
    <property type="entry name" value="Ribosome maturation factor RimP"/>
    <property type="match status" value="1"/>
</dbReference>
<dbReference type="Gene3D" id="2.30.30.180">
    <property type="entry name" value="Ribosome maturation factor RimP, C-terminal domain"/>
    <property type="match status" value="1"/>
</dbReference>
<dbReference type="Gene3D" id="3.30.300.70">
    <property type="entry name" value="RimP-like superfamily, N-terminal"/>
    <property type="match status" value="1"/>
</dbReference>
<dbReference type="HAMAP" id="MF_01077">
    <property type="entry name" value="RimP"/>
    <property type="match status" value="1"/>
</dbReference>
<dbReference type="InterPro" id="IPR003728">
    <property type="entry name" value="Ribosome_maturation_RimP"/>
</dbReference>
<dbReference type="InterPro" id="IPR028998">
    <property type="entry name" value="RimP_C"/>
</dbReference>
<dbReference type="InterPro" id="IPR036847">
    <property type="entry name" value="RimP_C_sf"/>
</dbReference>
<dbReference type="InterPro" id="IPR028989">
    <property type="entry name" value="RimP_N"/>
</dbReference>
<dbReference type="InterPro" id="IPR035956">
    <property type="entry name" value="RimP_N_sf"/>
</dbReference>
<dbReference type="NCBIfam" id="NF000927">
    <property type="entry name" value="PRK00092.1-1"/>
    <property type="match status" value="1"/>
</dbReference>
<dbReference type="NCBIfam" id="NF000931">
    <property type="entry name" value="PRK00092.2-3"/>
    <property type="match status" value="1"/>
</dbReference>
<dbReference type="PANTHER" id="PTHR33867">
    <property type="entry name" value="RIBOSOME MATURATION FACTOR RIMP"/>
    <property type="match status" value="1"/>
</dbReference>
<dbReference type="PANTHER" id="PTHR33867:SF1">
    <property type="entry name" value="RIBOSOME MATURATION FACTOR RIMP"/>
    <property type="match status" value="1"/>
</dbReference>
<dbReference type="Pfam" id="PF17384">
    <property type="entry name" value="DUF150_C"/>
    <property type="match status" value="1"/>
</dbReference>
<dbReference type="Pfam" id="PF02576">
    <property type="entry name" value="RimP_N"/>
    <property type="match status" value="1"/>
</dbReference>
<dbReference type="SUPFAM" id="SSF74942">
    <property type="entry name" value="YhbC-like, C-terminal domain"/>
    <property type="match status" value="1"/>
</dbReference>
<dbReference type="SUPFAM" id="SSF75420">
    <property type="entry name" value="YhbC-like, N-terminal domain"/>
    <property type="match status" value="1"/>
</dbReference>
<name>RIMP_XANOP</name>
<proteinExistence type="inferred from homology"/>
<keyword id="KW-0963">Cytoplasm</keyword>
<keyword id="KW-0690">Ribosome biogenesis</keyword>
<sequence length="196" mass="21256">MSEKATEIANLLSPTVDSLGVELLGVEYLPAPGGATLRLYIDVPLAEQPERVINVDDCERVSREVSAQLDVEDPISGHYTLEVSSPGVDRPLFTLEQFARHAGESTKIVLKLAQDGRRRFQGEILRIDAEAGAVVFAIDGKDVQIGFDNIDKARILPDWVALGLAPQKPNKPGPKKTGHEKKKPSNESAAGKPRAE</sequence>
<evidence type="ECO:0000255" key="1">
    <source>
        <dbReference type="HAMAP-Rule" id="MF_01077"/>
    </source>
</evidence>
<evidence type="ECO:0000256" key="2">
    <source>
        <dbReference type="SAM" id="MobiDB-lite"/>
    </source>
</evidence>
<evidence type="ECO:0000305" key="3"/>
<gene>
    <name evidence="1" type="primary">rimP</name>
    <name type="ordered locus">PXO_01301</name>
</gene>